<protein>
    <recommendedName>
        <fullName>Josephin-2</fullName>
        <ecNumber>3.4.19.12</ecNumber>
    </recommendedName>
    <alternativeName>
        <fullName>Josephin domain-containing protein 2</fullName>
    </alternativeName>
</protein>
<name>JOS2_HUMAN</name>
<keyword id="KW-0002">3D-structure</keyword>
<keyword id="KW-0025">Alternative splicing</keyword>
<keyword id="KW-0963">Cytoplasm</keyword>
<keyword id="KW-0378">Hydrolase</keyword>
<keyword id="KW-0645">Protease</keyword>
<keyword id="KW-1267">Proteomics identification</keyword>
<keyword id="KW-1185">Reference proteome</keyword>
<keyword id="KW-0833">Ubl conjugation pathway</keyword>
<reference key="1">
    <citation type="submission" date="2000-03" db="EMBL/GenBank/DDBJ databases">
        <title>Hypothetical transmembrane protein SBBI54.</title>
        <authorList>
            <person name="Li N."/>
            <person name="Wan T."/>
            <person name="Zhang W."/>
            <person name="Cao X."/>
        </authorList>
    </citation>
    <scope>NUCLEOTIDE SEQUENCE [MRNA] (ISOFORM 1)</scope>
</reference>
<reference key="2">
    <citation type="journal article" date="2004" name="Nat. Genet.">
        <title>Complete sequencing and characterization of 21,243 full-length human cDNAs.</title>
        <authorList>
            <person name="Ota T."/>
            <person name="Suzuki Y."/>
            <person name="Nishikawa T."/>
            <person name="Otsuki T."/>
            <person name="Sugiyama T."/>
            <person name="Irie R."/>
            <person name="Wakamatsu A."/>
            <person name="Hayashi K."/>
            <person name="Sato H."/>
            <person name="Nagai K."/>
            <person name="Kimura K."/>
            <person name="Makita H."/>
            <person name="Sekine M."/>
            <person name="Obayashi M."/>
            <person name="Nishi T."/>
            <person name="Shibahara T."/>
            <person name="Tanaka T."/>
            <person name="Ishii S."/>
            <person name="Yamamoto J."/>
            <person name="Saito K."/>
            <person name="Kawai Y."/>
            <person name="Isono Y."/>
            <person name="Nakamura Y."/>
            <person name="Nagahari K."/>
            <person name="Murakami K."/>
            <person name="Yasuda T."/>
            <person name="Iwayanagi T."/>
            <person name="Wagatsuma M."/>
            <person name="Shiratori A."/>
            <person name="Sudo H."/>
            <person name="Hosoiri T."/>
            <person name="Kaku Y."/>
            <person name="Kodaira H."/>
            <person name="Kondo H."/>
            <person name="Sugawara M."/>
            <person name="Takahashi M."/>
            <person name="Kanda K."/>
            <person name="Yokoi T."/>
            <person name="Furuya T."/>
            <person name="Kikkawa E."/>
            <person name="Omura Y."/>
            <person name="Abe K."/>
            <person name="Kamihara K."/>
            <person name="Katsuta N."/>
            <person name="Sato K."/>
            <person name="Tanikawa M."/>
            <person name="Yamazaki M."/>
            <person name="Ninomiya K."/>
            <person name="Ishibashi T."/>
            <person name="Yamashita H."/>
            <person name="Murakawa K."/>
            <person name="Fujimori K."/>
            <person name="Tanai H."/>
            <person name="Kimata M."/>
            <person name="Watanabe M."/>
            <person name="Hiraoka S."/>
            <person name="Chiba Y."/>
            <person name="Ishida S."/>
            <person name="Ono Y."/>
            <person name="Takiguchi S."/>
            <person name="Watanabe S."/>
            <person name="Yosida M."/>
            <person name="Hotuta T."/>
            <person name="Kusano J."/>
            <person name="Kanehori K."/>
            <person name="Takahashi-Fujii A."/>
            <person name="Hara H."/>
            <person name="Tanase T.-O."/>
            <person name="Nomura Y."/>
            <person name="Togiya S."/>
            <person name="Komai F."/>
            <person name="Hara R."/>
            <person name="Takeuchi K."/>
            <person name="Arita M."/>
            <person name="Imose N."/>
            <person name="Musashino K."/>
            <person name="Yuuki H."/>
            <person name="Oshima A."/>
            <person name="Sasaki N."/>
            <person name="Aotsuka S."/>
            <person name="Yoshikawa Y."/>
            <person name="Matsunawa H."/>
            <person name="Ichihara T."/>
            <person name="Shiohata N."/>
            <person name="Sano S."/>
            <person name="Moriya S."/>
            <person name="Momiyama H."/>
            <person name="Satoh N."/>
            <person name="Takami S."/>
            <person name="Terashima Y."/>
            <person name="Suzuki O."/>
            <person name="Nakagawa S."/>
            <person name="Senoh A."/>
            <person name="Mizoguchi H."/>
            <person name="Goto Y."/>
            <person name="Shimizu F."/>
            <person name="Wakebe H."/>
            <person name="Hishigaki H."/>
            <person name="Watanabe T."/>
            <person name="Sugiyama A."/>
            <person name="Takemoto M."/>
            <person name="Kawakami B."/>
            <person name="Yamazaki M."/>
            <person name="Watanabe K."/>
            <person name="Kumagai A."/>
            <person name="Itakura S."/>
            <person name="Fukuzumi Y."/>
            <person name="Fujimori Y."/>
            <person name="Komiyama M."/>
            <person name="Tashiro H."/>
            <person name="Tanigami A."/>
            <person name="Fujiwara T."/>
            <person name="Ono T."/>
            <person name="Yamada K."/>
            <person name="Fujii Y."/>
            <person name="Ozaki K."/>
            <person name="Hirao M."/>
            <person name="Ohmori Y."/>
            <person name="Kawabata A."/>
            <person name="Hikiji T."/>
            <person name="Kobatake N."/>
            <person name="Inagaki H."/>
            <person name="Ikema Y."/>
            <person name="Okamoto S."/>
            <person name="Okitani R."/>
            <person name="Kawakami T."/>
            <person name="Noguchi S."/>
            <person name="Itoh T."/>
            <person name="Shigeta K."/>
            <person name="Senba T."/>
            <person name="Matsumura K."/>
            <person name="Nakajima Y."/>
            <person name="Mizuno T."/>
            <person name="Morinaga M."/>
            <person name="Sasaki M."/>
            <person name="Togashi T."/>
            <person name="Oyama M."/>
            <person name="Hata H."/>
            <person name="Watanabe M."/>
            <person name="Komatsu T."/>
            <person name="Mizushima-Sugano J."/>
            <person name="Satoh T."/>
            <person name="Shirai Y."/>
            <person name="Takahashi Y."/>
            <person name="Nakagawa K."/>
            <person name="Okumura K."/>
            <person name="Nagase T."/>
            <person name="Nomura N."/>
            <person name="Kikuchi H."/>
            <person name="Masuho Y."/>
            <person name="Yamashita R."/>
            <person name="Nakai K."/>
            <person name="Yada T."/>
            <person name="Nakamura Y."/>
            <person name="Ohara O."/>
            <person name="Isogai T."/>
            <person name="Sugano S."/>
        </authorList>
    </citation>
    <scope>NUCLEOTIDE SEQUENCE [LARGE SCALE MRNA] (ISOFORM 2)</scope>
    <source>
        <tissue>Macrophage</tissue>
    </source>
</reference>
<reference key="3">
    <citation type="journal article" date="2004" name="Nature">
        <title>The DNA sequence and biology of human chromosome 19.</title>
        <authorList>
            <person name="Grimwood J."/>
            <person name="Gordon L.A."/>
            <person name="Olsen A.S."/>
            <person name="Terry A."/>
            <person name="Schmutz J."/>
            <person name="Lamerdin J.E."/>
            <person name="Hellsten U."/>
            <person name="Goodstein D."/>
            <person name="Couronne O."/>
            <person name="Tran-Gyamfi M."/>
            <person name="Aerts A."/>
            <person name="Altherr M."/>
            <person name="Ashworth L."/>
            <person name="Bajorek E."/>
            <person name="Black S."/>
            <person name="Branscomb E."/>
            <person name="Caenepeel S."/>
            <person name="Carrano A.V."/>
            <person name="Caoile C."/>
            <person name="Chan Y.M."/>
            <person name="Christensen M."/>
            <person name="Cleland C.A."/>
            <person name="Copeland A."/>
            <person name="Dalin E."/>
            <person name="Dehal P."/>
            <person name="Denys M."/>
            <person name="Detter J.C."/>
            <person name="Escobar J."/>
            <person name="Flowers D."/>
            <person name="Fotopulos D."/>
            <person name="Garcia C."/>
            <person name="Georgescu A.M."/>
            <person name="Glavina T."/>
            <person name="Gomez M."/>
            <person name="Gonzales E."/>
            <person name="Groza M."/>
            <person name="Hammon N."/>
            <person name="Hawkins T."/>
            <person name="Haydu L."/>
            <person name="Ho I."/>
            <person name="Huang W."/>
            <person name="Israni S."/>
            <person name="Jett J."/>
            <person name="Kadner K."/>
            <person name="Kimball H."/>
            <person name="Kobayashi A."/>
            <person name="Larionov V."/>
            <person name="Leem S.-H."/>
            <person name="Lopez F."/>
            <person name="Lou Y."/>
            <person name="Lowry S."/>
            <person name="Malfatti S."/>
            <person name="Martinez D."/>
            <person name="McCready P.M."/>
            <person name="Medina C."/>
            <person name="Morgan J."/>
            <person name="Nelson K."/>
            <person name="Nolan M."/>
            <person name="Ovcharenko I."/>
            <person name="Pitluck S."/>
            <person name="Pollard M."/>
            <person name="Popkie A.P."/>
            <person name="Predki P."/>
            <person name="Quan G."/>
            <person name="Ramirez L."/>
            <person name="Rash S."/>
            <person name="Retterer J."/>
            <person name="Rodriguez A."/>
            <person name="Rogers S."/>
            <person name="Salamov A."/>
            <person name="Salazar A."/>
            <person name="She X."/>
            <person name="Smith D."/>
            <person name="Slezak T."/>
            <person name="Solovyev V."/>
            <person name="Thayer N."/>
            <person name="Tice H."/>
            <person name="Tsai M."/>
            <person name="Ustaszewska A."/>
            <person name="Vo N."/>
            <person name="Wagner M."/>
            <person name="Wheeler J."/>
            <person name="Wu K."/>
            <person name="Xie G."/>
            <person name="Yang J."/>
            <person name="Dubchak I."/>
            <person name="Furey T.S."/>
            <person name="DeJong P."/>
            <person name="Dickson M."/>
            <person name="Gordon D."/>
            <person name="Eichler E.E."/>
            <person name="Pennacchio L.A."/>
            <person name="Richardson P."/>
            <person name="Stubbs L."/>
            <person name="Rokhsar D.S."/>
            <person name="Myers R.M."/>
            <person name="Rubin E.M."/>
            <person name="Lucas S.M."/>
        </authorList>
    </citation>
    <scope>NUCLEOTIDE SEQUENCE [LARGE SCALE GENOMIC DNA]</scope>
</reference>
<reference key="4">
    <citation type="submission" date="2005-07" db="EMBL/GenBank/DDBJ databases">
        <authorList>
            <person name="Mural R.J."/>
            <person name="Istrail S."/>
            <person name="Sutton G."/>
            <person name="Florea L."/>
            <person name="Halpern A.L."/>
            <person name="Mobarry C.M."/>
            <person name="Lippert R."/>
            <person name="Walenz B."/>
            <person name="Shatkay H."/>
            <person name="Dew I."/>
            <person name="Miller J.R."/>
            <person name="Flanigan M.J."/>
            <person name="Edwards N.J."/>
            <person name="Bolanos R."/>
            <person name="Fasulo D."/>
            <person name="Halldorsson B.V."/>
            <person name="Hannenhalli S."/>
            <person name="Turner R."/>
            <person name="Yooseph S."/>
            <person name="Lu F."/>
            <person name="Nusskern D.R."/>
            <person name="Shue B.C."/>
            <person name="Zheng X.H."/>
            <person name="Zhong F."/>
            <person name="Delcher A.L."/>
            <person name="Huson D.H."/>
            <person name="Kravitz S.A."/>
            <person name="Mouchard L."/>
            <person name="Reinert K."/>
            <person name="Remington K.A."/>
            <person name="Clark A.G."/>
            <person name="Waterman M.S."/>
            <person name="Eichler E.E."/>
            <person name="Adams M.D."/>
            <person name="Hunkapiller M.W."/>
            <person name="Myers E.W."/>
            <person name="Venter J.C."/>
        </authorList>
    </citation>
    <scope>NUCLEOTIDE SEQUENCE [LARGE SCALE GENOMIC DNA]</scope>
</reference>
<reference key="5">
    <citation type="journal article" date="2004" name="Genome Res.">
        <title>The status, quality, and expansion of the NIH full-length cDNA project: the Mammalian Gene Collection (MGC).</title>
        <authorList>
            <consortium name="The MGC Project Team"/>
        </authorList>
    </citation>
    <scope>NUCLEOTIDE SEQUENCE [LARGE SCALE MRNA] (ISOFORM 1)</scope>
    <source>
        <tissue>Uterus</tissue>
    </source>
</reference>
<reference key="6">
    <citation type="journal article" date="2007" name="Biol. Chem.">
        <title>Josephin domain-containing proteins from a variety of species are active de-ubiquitination enzymes.</title>
        <authorList>
            <person name="Tzvetkov N."/>
            <person name="Breuer P."/>
        </authorList>
    </citation>
    <scope>CATALYTIC ACTIVITY</scope>
    <scope>FUNCTION</scope>
</reference>
<reference key="7">
    <citation type="journal article" date="2011" name="J. Biol. Chem.">
        <title>Crystal structure of a Josephin-ubiquitin complex: evolutionary restraints on ataxin-3 deubiquitinating activity.</title>
        <authorList>
            <person name="Weeks S.D."/>
            <person name="Grasty K.C."/>
            <person name="Hernandez-Cuebas L."/>
            <person name="Loll P.J."/>
        </authorList>
    </citation>
    <scope>CATALYTIC ACTIVITY</scope>
    <scope>FUNCTION</scope>
</reference>
<reference key="8">
    <citation type="journal article" date="2013" name="J. Biol. Chem.">
        <title>JosD1, a membrane-targeted deubiquitinating enzyme, is activated by ubiquitination and regulates membrane dynamics, cell motility, and endocytosis.</title>
        <authorList>
            <person name="Seki T."/>
            <person name="Gong L."/>
            <person name="Williams A.J."/>
            <person name="Sakai N."/>
            <person name="Todi S.V."/>
            <person name="Paulson H.L."/>
        </authorList>
    </citation>
    <scope>FUNCTION</scope>
    <scope>SUBCELLULAR LOCATION</scope>
    <scope>MUTAGENESIS OF CYS-24</scope>
</reference>
<reference key="9">
    <citation type="journal article" date="2003" name="Proteins">
        <title>Structural modeling of ataxin-3 reveals distant homology to adaptins.</title>
        <authorList>
            <person name="Albrecht M."/>
            <person name="Hoffmann D."/>
            <person name="Evert B.O."/>
            <person name="Schmitt I."/>
            <person name="Wuellner U."/>
            <person name="Lengauer T."/>
        </authorList>
    </citation>
    <scope>3D-STRUCTURE MODELING</scope>
</reference>
<accession>Q8TAC2</accession>
<accession>M0QX25</accession>
<gene>
    <name type="primary">JOSD2</name>
    <name type="ORF">SBBI54</name>
</gene>
<feature type="chain" id="PRO_0000053843" description="Josephin-2">
    <location>
        <begin position="1"/>
        <end position="188"/>
    </location>
</feature>
<feature type="domain" description="Josephin" evidence="1">
    <location>
        <begin position="11"/>
        <end position="188"/>
    </location>
</feature>
<feature type="active site" description="Nucleophile" evidence="1">
    <location>
        <position position="24"/>
    </location>
</feature>
<feature type="active site" description="Proton acceptor" evidence="1">
    <location>
        <position position="125"/>
    </location>
</feature>
<feature type="splice variant" id="VSP_047537" description="In isoform 2." evidence="5">
    <location>
        <begin position="49"/>
        <end position="90"/>
    </location>
</feature>
<feature type="mutagenesis site" description="Loss of deubiquitination activity, no change in subcellular location." evidence="4">
    <original>C</original>
    <variation>A</variation>
    <location>
        <position position="24"/>
    </location>
</feature>
<feature type="helix" evidence="6">
    <location>
        <begin position="24"/>
        <end position="33"/>
    </location>
</feature>
<feature type="helix" evidence="6">
    <location>
        <begin position="40"/>
        <end position="49"/>
    </location>
</feature>
<feature type="helix" evidence="6">
    <location>
        <begin position="70"/>
        <end position="78"/>
    </location>
</feature>
<feature type="turn" evidence="6">
    <location>
        <begin position="79"/>
        <end position="81"/>
    </location>
</feature>
<feature type="strand" evidence="6">
    <location>
        <begin position="82"/>
        <end position="86"/>
    </location>
</feature>
<feature type="helix" evidence="6">
    <location>
        <begin position="93"/>
        <end position="95"/>
    </location>
</feature>
<feature type="helix" evidence="6">
    <location>
        <begin position="98"/>
        <end position="100"/>
    </location>
</feature>
<feature type="strand" evidence="6">
    <location>
        <begin position="102"/>
        <end position="109"/>
    </location>
</feature>
<feature type="strand" evidence="6">
    <location>
        <begin position="124"/>
        <end position="132"/>
    </location>
</feature>
<feature type="strand" evidence="6">
    <location>
        <begin position="135"/>
        <end position="138"/>
    </location>
</feature>
<feature type="strand" evidence="6">
    <location>
        <begin position="143"/>
        <end position="145"/>
    </location>
</feature>
<feature type="strand" evidence="6">
    <location>
        <begin position="147"/>
        <end position="151"/>
    </location>
</feature>
<feature type="helix" evidence="6">
    <location>
        <begin position="152"/>
        <end position="165"/>
    </location>
</feature>
<feature type="strand" evidence="6">
    <location>
        <begin position="169"/>
        <end position="175"/>
    </location>
</feature>
<feature type="helix" evidence="6">
    <location>
        <begin position="176"/>
        <end position="181"/>
    </location>
</feature>
<feature type="turn" evidence="6">
    <location>
        <begin position="182"/>
        <end position="184"/>
    </location>
</feature>
<evidence type="ECO:0000255" key="1">
    <source>
        <dbReference type="PROSITE-ProRule" id="PRU00331"/>
    </source>
</evidence>
<evidence type="ECO:0000269" key="2">
    <source>
    </source>
</evidence>
<evidence type="ECO:0000269" key="3">
    <source>
    </source>
</evidence>
<evidence type="ECO:0000269" key="4">
    <source>
    </source>
</evidence>
<evidence type="ECO:0000303" key="5">
    <source>
    </source>
</evidence>
<evidence type="ECO:0007829" key="6">
    <source>
        <dbReference type="PDB" id="6PGV"/>
    </source>
</evidence>
<sequence>MSQAPGAQPSPPTVYHERQRLELCAVHALNNVLQQQLFSQEAADEICKRLAPDSRLNPHRSLLGTGNYDVNVIMAALQGLGLAAVWWDRRRPLSQLALPQVLGLILNLPSPVSLGLLSLPLRRRHWVALRQVDGVYYNLDSKLRAPEALGDEDGVRAFLAAALAQGLCEVLLVVTKEVEEKGSWLRTD</sequence>
<dbReference type="EC" id="3.4.19.12"/>
<dbReference type="EMBL" id="AF247787">
    <property type="protein sequence ID" value="AAL95692.1"/>
    <property type="molecule type" value="mRNA"/>
</dbReference>
<dbReference type="EMBL" id="AK131052">
    <property type="status" value="NOT_ANNOTATED_CDS"/>
    <property type="molecule type" value="mRNA"/>
</dbReference>
<dbReference type="EMBL" id="AC008743">
    <property type="status" value="NOT_ANNOTATED_CDS"/>
    <property type="molecule type" value="Genomic_DNA"/>
</dbReference>
<dbReference type="EMBL" id="CH471135">
    <property type="protein sequence ID" value="EAW71877.1"/>
    <property type="molecule type" value="Genomic_DNA"/>
</dbReference>
<dbReference type="EMBL" id="BC062416">
    <property type="protein sequence ID" value="AAH62416.1"/>
    <property type="molecule type" value="mRNA"/>
</dbReference>
<dbReference type="CCDS" id="CCDS12797.1">
    <molecule id="Q8TAC2-1"/>
</dbReference>
<dbReference type="CCDS" id="CCDS59413.1">
    <molecule id="Q8TAC2-2"/>
</dbReference>
<dbReference type="RefSeq" id="NP_001257568.1">
    <molecule id="Q8TAC2-1"/>
    <property type="nucleotide sequence ID" value="NM_001270639.2"/>
</dbReference>
<dbReference type="RefSeq" id="NP_001257569.1">
    <molecule id="Q8TAC2-1"/>
    <property type="nucleotide sequence ID" value="NM_001270640.2"/>
</dbReference>
<dbReference type="RefSeq" id="NP_001257570.1">
    <molecule id="Q8TAC2-2"/>
    <property type="nucleotide sequence ID" value="NM_001270641.2"/>
</dbReference>
<dbReference type="RefSeq" id="NP_001257615.1">
    <molecule id="Q8TAC2-1"/>
    <property type="nucleotide sequence ID" value="NM_001270686.2"/>
</dbReference>
<dbReference type="RefSeq" id="NP_612207.1">
    <molecule id="Q8TAC2-1"/>
    <property type="nucleotide sequence ID" value="NM_138334.4"/>
</dbReference>
<dbReference type="RefSeq" id="XP_011524736.1">
    <property type="nucleotide sequence ID" value="XM_011526434.2"/>
</dbReference>
<dbReference type="PDB" id="6PGV">
    <property type="method" value="X-ray"/>
    <property type="resolution" value="2.30 A"/>
    <property type="chains" value="A=1-188"/>
</dbReference>
<dbReference type="PDBsum" id="6PGV"/>
<dbReference type="SMR" id="Q8TAC2"/>
<dbReference type="BioGRID" id="125956">
    <property type="interactions" value="39"/>
</dbReference>
<dbReference type="FunCoup" id="Q8TAC2">
    <property type="interactions" value="562"/>
</dbReference>
<dbReference type="IntAct" id="Q8TAC2">
    <property type="interactions" value="22"/>
</dbReference>
<dbReference type="STRING" id="9606.ENSP00000468956"/>
<dbReference type="BindingDB" id="Q8TAC2"/>
<dbReference type="ChEMBL" id="CHEMBL4630845"/>
<dbReference type="MEROPS" id="C86.005"/>
<dbReference type="GlyGen" id="Q8TAC2">
    <property type="glycosylation" value="1 site, 1 O-linked glycan (1 site)"/>
</dbReference>
<dbReference type="iPTMnet" id="Q8TAC2"/>
<dbReference type="PhosphoSitePlus" id="Q8TAC2"/>
<dbReference type="BioMuta" id="JOSD2"/>
<dbReference type="DMDM" id="29840785"/>
<dbReference type="jPOST" id="Q8TAC2"/>
<dbReference type="MassIVE" id="Q8TAC2"/>
<dbReference type="PaxDb" id="9606-ENSP00000468956"/>
<dbReference type="PeptideAtlas" id="Q8TAC2"/>
<dbReference type="ProteomicsDB" id="73855">
    <molecule id="Q8TAC2-1"/>
</dbReference>
<dbReference type="Pumba" id="Q8TAC2"/>
<dbReference type="TopDownProteomics" id="Q8TAC2-1">
    <molecule id="Q8TAC2-1"/>
</dbReference>
<dbReference type="Antibodypedia" id="53685">
    <property type="antibodies" value="80 antibodies from 19 providers"/>
</dbReference>
<dbReference type="DNASU" id="126119"/>
<dbReference type="Ensembl" id="ENST00000595669.5">
    <molecule id="Q8TAC2-2"/>
    <property type="protein sequence ID" value="ENSP00000468860.1"/>
    <property type="gene ID" value="ENSG00000161677.12"/>
</dbReference>
<dbReference type="Ensembl" id="ENST00000598418.6">
    <molecule id="Q8TAC2-1"/>
    <property type="protein sequence ID" value="ENSP00000468956.2"/>
    <property type="gene ID" value="ENSG00000161677.12"/>
</dbReference>
<dbReference type="Ensembl" id="ENST00000601423.5">
    <molecule id="Q8TAC2-1"/>
    <property type="protein sequence ID" value="ENSP00000472116.1"/>
    <property type="gene ID" value="ENSG00000161677.12"/>
</dbReference>
<dbReference type="GeneID" id="126119"/>
<dbReference type="KEGG" id="hsa:126119"/>
<dbReference type="MANE-Select" id="ENST00000598418.6">
    <property type="protein sequence ID" value="ENSP00000468956.2"/>
    <property type="RefSeq nucleotide sequence ID" value="NM_001270639.2"/>
    <property type="RefSeq protein sequence ID" value="NP_001257568.1"/>
</dbReference>
<dbReference type="UCSC" id="uc002pso.3">
    <molecule id="Q8TAC2-1"/>
    <property type="organism name" value="human"/>
</dbReference>
<dbReference type="AGR" id="HGNC:28853"/>
<dbReference type="CTD" id="126119"/>
<dbReference type="DisGeNET" id="126119"/>
<dbReference type="GeneCards" id="JOSD2"/>
<dbReference type="HGNC" id="HGNC:28853">
    <property type="gene designation" value="JOSD2"/>
</dbReference>
<dbReference type="HPA" id="ENSG00000161677">
    <property type="expression patterns" value="Low tissue specificity"/>
</dbReference>
<dbReference type="MIM" id="615324">
    <property type="type" value="gene"/>
</dbReference>
<dbReference type="neXtProt" id="NX_Q8TAC2"/>
<dbReference type="OpenTargets" id="ENSG00000161677"/>
<dbReference type="PharmGKB" id="PA142671645"/>
<dbReference type="VEuPathDB" id="HostDB:ENSG00000161677"/>
<dbReference type="eggNOG" id="KOG2934">
    <property type="taxonomic scope" value="Eukaryota"/>
</dbReference>
<dbReference type="GeneTree" id="ENSGT00390000009228"/>
<dbReference type="HOGENOM" id="CLU_103892_2_0_1"/>
<dbReference type="InParanoid" id="Q8TAC2"/>
<dbReference type="OMA" id="QRNCEAV"/>
<dbReference type="OrthoDB" id="422700at2759"/>
<dbReference type="PAN-GO" id="Q8TAC2">
    <property type="GO annotations" value="2 GO annotations based on evolutionary models"/>
</dbReference>
<dbReference type="PhylomeDB" id="Q8TAC2"/>
<dbReference type="TreeFam" id="TF313660"/>
<dbReference type="PathwayCommons" id="Q8TAC2"/>
<dbReference type="Reactome" id="R-HSA-5689877">
    <property type="pathway name" value="Josephin domain DUBs"/>
</dbReference>
<dbReference type="SignaLink" id="Q8TAC2"/>
<dbReference type="BioGRID-ORCS" id="126119">
    <property type="hits" value="17 hits in 1190 CRISPR screens"/>
</dbReference>
<dbReference type="ChiTaRS" id="JOSD2">
    <property type="organism name" value="human"/>
</dbReference>
<dbReference type="GenomeRNAi" id="126119"/>
<dbReference type="Pharos" id="Q8TAC2">
    <property type="development level" value="Tbio"/>
</dbReference>
<dbReference type="PRO" id="PR:Q8TAC2"/>
<dbReference type="Proteomes" id="UP000005640">
    <property type="component" value="Chromosome 19"/>
</dbReference>
<dbReference type="RNAct" id="Q8TAC2">
    <property type="molecule type" value="protein"/>
</dbReference>
<dbReference type="Bgee" id="ENSG00000161677">
    <property type="expression patterns" value="Expressed in C1 segment of cervical spinal cord and 159 other cell types or tissues"/>
</dbReference>
<dbReference type="ExpressionAtlas" id="Q8TAC2">
    <property type="expression patterns" value="baseline and differential"/>
</dbReference>
<dbReference type="GO" id="GO:0005829">
    <property type="term" value="C:cytosol"/>
    <property type="evidence" value="ECO:0000304"/>
    <property type="project" value="Reactome"/>
</dbReference>
<dbReference type="GO" id="GO:0004843">
    <property type="term" value="F:cysteine-type deubiquitinase activity"/>
    <property type="evidence" value="ECO:0000314"/>
    <property type="project" value="UniProtKB"/>
</dbReference>
<dbReference type="GO" id="GO:0016579">
    <property type="term" value="P:protein deubiquitination"/>
    <property type="evidence" value="ECO:0000314"/>
    <property type="project" value="UniProtKB"/>
</dbReference>
<dbReference type="GO" id="GO:0006508">
    <property type="term" value="P:proteolysis"/>
    <property type="evidence" value="ECO:0007669"/>
    <property type="project" value="UniProtKB-KW"/>
</dbReference>
<dbReference type="FunFam" id="3.90.70.40:FF:000003">
    <property type="entry name" value="josephin-2 isoform X1"/>
    <property type="match status" value="1"/>
</dbReference>
<dbReference type="Gene3D" id="3.90.70.40">
    <property type="match status" value="1"/>
</dbReference>
<dbReference type="InterPro" id="IPR040053">
    <property type="entry name" value="JOSD1/2"/>
</dbReference>
<dbReference type="InterPro" id="IPR006155">
    <property type="entry name" value="Josephin"/>
</dbReference>
<dbReference type="PANTHER" id="PTHR13291">
    <property type="entry name" value="JOSEPHIN 1, 2"/>
    <property type="match status" value="1"/>
</dbReference>
<dbReference type="PANTHER" id="PTHR13291:SF2">
    <property type="entry name" value="JOSEPHIN-2"/>
    <property type="match status" value="1"/>
</dbReference>
<dbReference type="Pfam" id="PF02099">
    <property type="entry name" value="Josephin"/>
    <property type="match status" value="1"/>
</dbReference>
<dbReference type="PRINTS" id="PR01233">
    <property type="entry name" value="JOSEPHIN"/>
</dbReference>
<dbReference type="SMART" id="SM01246">
    <property type="entry name" value="Josephin"/>
    <property type="match status" value="1"/>
</dbReference>
<dbReference type="PROSITE" id="PS50957">
    <property type="entry name" value="JOSEPHIN"/>
    <property type="match status" value="1"/>
</dbReference>
<comment type="function">
    <text evidence="2 3 4">Cleaves 'Lys-63'-linked poly-ubiquitin chains, and with lesser efficiency 'Lys-48'-linked poly-ubiquitin chains (in vitro). May act as a deubiquitinating enzyme.</text>
</comment>
<comment type="catalytic activity">
    <reaction evidence="2 3">
        <text>Thiol-dependent hydrolysis of ester, thioester, amide, peptide and isopeptide bonds formed by the C-terminal Gly of ubiquitin (a 76-residue protein attached to proteins as an intracellular targeting signal).</text>
        <dbReference type="EC" id="3.4.19.12"/>
    </reaction>
</comment>
<comment type="interaction">
    <interactant intactId="EBI-12205593">
        <id>Q8TAC2</id>
    </interactant>
    <interactant intactId="EBI-2371423">
        <id>O43865</id>
        <label>AHCYL1</label>
    </interactant>
    <organismsDiffer>false</organismsDiffer>
    <experiments>5</experiments>
</comment>
<comment type="interaction">
    <interactant intactId="EBI-12205593">
        <id>Q8TAC2</id>
    </interactant>
    <interactant intactId="EBI-11522780">
        <id>Q96DZ9-2</id>
        <label>CMTM5</label>
    </interactant>
    <organismsDiffer>false</organismsDiffer>
    <experiments>3</experiments>
</comment>
<comment type="interaction">
    <interactant intactId="EBI-12205593">
        <id>Q8TAC2</id>
    </interactant>
    <interactant intactId="EBI-745535">
        <id>Q8NI60</id>
        <label>COQ8A</label>
    </interactant>
    <organismsDiffer>false</organismsDiffer>
    <experiments>3</experiments>
</comment>
<comment type="interaction">
    <interactant intactId="EBI-12205593">
        <id>Q8TAC2</id>
    </interactant>
    <interactant intactId="EBI-3918971">
        <id>Q9Y680</id>
        <label>FKBP7</label>
    </interactant>
    <organismsDiffer>false</organismsDiffer>
    <experiments>3</experiments>
</comment>
<comment type="interaction">
    <interactant intactId="EBI-12205593">
        <id>Q8TAC2</id>
    </interactant>
    <interactant intactId="EBI-2816356">
        <id>Q8IX19</id>
        <label>MCEMP1</label>
    </interactant>
    <organismsDiffer>false</organismsDiffer>
    <experiments>2</experiments>
</comment>
<comment type="interaction">
    <interactant intactId="EBI-12205593">
        <id>Q8TAC2</id>
    </interactant>
    <interactant intactId="EBI-722444">
        <id>P21741</id>
        <label>MDK</label>
    </interactant>
    <organismsDiffer>false</organismsDiffer>
    <experiments>3</experiments>
</comment>
<comment type="interaction">
    <interactant intactId="EBI-12205593">
        <id>Q8TAC2</id>
    </interactant>
    <interactant intactId="EBI-355179">
        <id>Q9UBC9</id>
        <label>SPRR3</label>
    </interactant>
    <organismsDiffer>false</organismsDiffer>
    <experiments>2</experiments>
</comment>
<comment type="interaction">
    <interactant intactId="EBI-12205593">
        <id>Q8TAC2</id>
    </interactant>
    <interactant intactId="EBI-9071725">
        <id>P08247</id>
        <label>SYP</label>
    </interactant>
    <organismsDiffer>false</organismsDiffer>
    <experiments>3</experiments>
</comment>
<comment type="interaction">
    <interactant intactId="EBI-12205593">
        <id>Q8TAC2</id>
    </interactant>
    <interactant intactId="EBI-11961968">
        <id>P0DI81-3</id>
        <label>TRAPPC2</label>
    </interactant>
    <organismsDiffer>false</organismsDiffer>
    <experiments>3</experiments>
</comment>
<comment type="interaction">
    <interactant intactId="EBI-12205593">
        <id>Q8TAC2</id>
    </interactant>
    <interactant intactId="EBI-10210710">
        <id>P49638</id>
        <label>TTPA</label>
    </interactant>
    <organismsDiffer>false</organismsDiffer>
    <experiments>3</experiments>
</comment>
<comment type="interaction">
    <interactant intactId="EBI-12205593">
        <id>Q8TAC2</id>
    </interactant>
    <interactant intactId="EBI-2799703">
        <id>O95070</id>
        <label>YIF1A</label>
    </interactant>
    <organismsDiffer>false</organismsDiffer>
    <experiments>3</experiments>
</comment>
<comment type="subcellular location">
    <subcellularLocation>
        <location evidence="4">Cytoplasm</location>
        <location evidence="4">Cytosol</location>
    </subcellularLocation>
</comment>
<comment type="alternative products">
    <event type="alternative splicing"/>
    <isoform>
        <id>Q8TAC2-1</id>
        <name>1</name>
        <sequence type="displayed"/>
    </isoform>
    <isoform>
        <id>Q8TAC2-2</id>
        <name>2</name>
        <sequence type="described" ref="VSP_047537"/>
    </isoform>
</comment>
<organism>
    <name type="scientific">Homo sapiens</name>
    <name type="common">Human</name>
    <dbReference type="NCBI Taxonomy" id="9606"/>
    <lineage>
        <taxon>Eukaryota</taxon>
        <taxon>Metazoa</taxon>
        <taxon>Chordata</taxon>
        <taxon>Craniata</taxon>
        <taxon>Vertebrata</taxon>
        <taxon>Euteleostomi</taxon>
        <taxon>Mammalia</taxon>
        <taxon>Eutheria</taxon>
        <taxon>Euarchontoglires</taxon>
        <taxon>Primates</taxon>
        <taxon>Haplorrhini</taxon>
        <taxon>Catarrhini</taxon>
        <taxon>Hominidae</taxon>
        <taxon>Homo</taxon>
    </lineage>
</organism>
<proteinExistence type="evidence at protein level"/>